<comment type="function">
    <text evidence="1">Catalyzes the NADPH-dependent rearrangement and reduction of 1-deoxy-D-xylulose-5-phosphate (DXP) to 2-C-methyl-D-erythritol 4-phosphate (MEP).</text>
</comment>
<comment type="catalytic activity">
    <reaction evidence="1">
        <text>2-C-methyl-D-erythritol 4-phosphate + NADP(+) = 1-deoxy-D-xylulose 5-phosphate + NADPH + H(+)</text>
        <dbReference type="Rhea" id="RHEA:13717"/>
        <dbReference type="ChEBI" id="CHEBI:15378"/>
        <dbReference type="ChEBI" id="CHEBI:57783"/>
        <dbReference type="ChEBI" id="CHEBI:57792"/>
        <dbReference type="ChEBI" id="CHEBI:58262"/>
        <dbReference type="ChEBI" id="CHEBI:58349"/>
        <dbReference type="EC" id="1.1.1.267"/>
    </reaction>
    <physiologicalReaction direction="right-to-left" evidence="1">
        <dbReference type="Rhea" id="RHEA:13719"/>
    </physiologicalReaction>
</comment>
<comment type="cofactor">
    <cofactor evidence="1">
        <name>Mg(2+)</name>
        <dbReference type="ChEBI" id="CHEBI:18420"/>
    </cofactor>
    <cofactor evidence="1">
        <name>Mn(2+)</name>
        <dbReference type="ChEBI" id="CHEBI:29035"/>
    </cofactor>
</comment>
<comment type="pathway">
    <text evidence="1">Isoprenoid biosynthesis; isopentenyl diphosphate biosynthesis via DXP pathway; isopentenyl diphosphate from 1-deoxy-D-xylulose 5-phosphate: step 1/6.</text>
</comment>
<comment type="similarity">
    <text evidence="1">Belongs to the DXR family.</text>
</comment>
<organism>
    <name type="scientific">Xanthomonas oryzae pv. oryzae (strain PXO99A)</name>
    <dbReference type="NCBI Taxonomy" id="360094"/>
    <lineage>
        <taxon>Bacteria</taxon>
        <taxon>Pseudomonadati</taxon>
        <taxon>Pseudomonadota</taxon>
        <taxon>Gammaproteobacteria</taxon>
        <taxon>Lysobacterales</taxon>
        <taxon>Lysobacteraceae</taxon>
        <taxon>Xanthomonas</taxon>
    </lineage>
</organism>
<accession>B2SR05</accession>
<dbReference type="EC" id="1.1.1.267" evidence="1"/>
<dbReference type="EMBL" id="CP000967">
    <property type="protein sequence ID" value="ACD59566.1"/>
    <property type="molecule type" value="Genomic_DNA"/>
</dbReference>
<dbReference type="RefSeq" id="WP_012445186.1">
    <property type="nucleotide sequence ID" value="NC_010717.2"/>
</dbReference>
<dbReference type="SMR" id="B2SR05"/>
<dbReference type="KEGG" id="xop:PXO_01125"/>
<dbReference type="eggNOG" id="COG0743">
    <property type="taxonomic scope" value="Bacteria"/>
</dbReference>
<dbReference type="HOGENOM" id="CLU_035714_4_0_6"/>
<dbReference type="UniPathway" id="UPA00056">
    <property type="reaction ID" value="UER00092"/>
</dbReference>
<dbReference type="Proteomes" id="UP000001740">
    <property type="component" value="Chromosome"/>
</dbReference>
<dbReference type="GO" id="GO:0030604">
    <property type="term" value="F:1-deoxy-D-xylulose-5-phosphate reductoisomerase activity"/>
    <property type="evidence" value="ECO:0007669"/>
    <property type="project" value="UniProtKB-UniRule"/>
</dbReference>
<dbReference type="GO" id="GO:0030145">
    <property type="term" value="F:manganese ion binding"/>
    <property type="evidence" value="ECO:0007669"/>
    <property type="project" value="TreeGrafter"/>
</dbReference>
<dbReference type="GO" id="GO:0070402">
    <property type="term" value="F:NADPH binding"/>
    <property type="evidence" value="ECO:0007669"/>
    <property type="project" value="InterPro"/>
</dbReference>
<dbReference type="GO" id="GO:0051484">
    <property type="term" value="P:isopentenyl diphosphate biosynthetic process, methylerythritol 4-phosphate pathway involved in terpenoid biosynthetic process"/>
    <property type="evidence" value="ECO:0007669"/>
    <property type="project" value="TreeGrafter"/>
</dbReference>
<dbReference type="FunFam" id="3.40.50.720:FF:000045">
    <property type="entry name" value="1-deoxy-D-xylulose 5-phosphate reductoisomerase"/>
    <property type="match status" value="1"/>
</dbReference>
<dbReference type="Gene3D" id="1.10.1740.10">
    <property type="match status" value="1"/>
</dbReference>
<dbReference type="Gene3D" id="3.40.50.720">
    <property type="entry name" value="NAD(P)-binding Rossmann-like Domain"/>
    <property type="match status" value="1"/>
</dbReference>
<dbReference type="HAMAP" id="MF_00183">
    <property type="entry name" value="DXP_reductoisom"/>
    <property type="match status" value="1"/>
</dbReference>
<dbReference type="InterPro" id="IPR003821">
    <property type="entry name" value="DXP_reductoisomerase"/>
</dbReference>
<dbReference type="InterPro" id="IPR013644">
    <property type="entry name" value="DXP_reductoisomerase_C"/>
</dbReference>
<dbReference type="InterPro" id="IPR013512">
    <property type="entry name" value="DXP_reductoisomerase_N"/>
</dbReference>
<dbReference type="InterPro" id="IPR026877">
    <property type="entry name" value="DXPR_C"/>
</dbReference>
<dbReference type="InterPro" id="IPR036169">
    <property type="entry name" value="DXPR_C_sf"/>
</dbReference>
<dbReference type="InterPro" id="IPR036291">
    <property type="entry name" value="NAD(P)-bd_dom_sf"/>
</dbReference>
<dbReference type="NCBIfam" id="TIGR00243">
    <property type="entry name" value="Dxr"/>
    <property type="match status" value="1"/>
</dbReference>
<dbReference type="NCBIfam" id="NF009114">
    <property type="entry name" value="PRK12464.1"/>
    <property type="match status" value="1"/>
</dbReference>
<dbReference type="PANTHER" id="PTHR30525">
    <property type="entry name" value="1-DEOXY-D-XYLULOSE 5-PHOSPHATE REDUCTOISOMERASE"/>
    <property type="match status" value="1"/>
</dbReference>
<dbReference type="PANTHER" id="PTHR30525:SF0">
    <property type="entry name" value="1-DEOXY-D-XYLULOSE 5-PHOSPHATE REDUCTOISOMERASE, CHLOROPLASTIC"/>
    <property type="match status" value="1"/>
</dbReference>
<dbReference type="Pfam" id="PF08436">
    <property type="entry name" value="DXP_redisom_C"/>
    <property type="match status" value="1"/>
</dbReference>
<dbReference type="Pfam" id="PF02670">
    <property type="entry name" value="DXP_reductoisom"/>
    <property type="match status" value="1"/>
</dbReference>
<dbReference type="Pfam" id="PF13288">
    <property type="entry name" value="DXPR_C"/>
    <property type="match status" value="1"/>
</dbReference>
<dbReference type="PIRSF" id="PIRSF006205">
    <property type="entry name" value="Dxp_reductismrs"/>
    <property type="match status" value="1"/>
</dbReference>
<dbReference type="SUPFAM" id="SSF69055">
    <property type="entry name" value="1-deoxy-D-xylulose-5-phosphate reductoisomerase, C-terminal domain"/>
    <property type="match status" value="1"/>
</dbReference>
<dbReference type="SUPFAM" id="SSF55347">
    <property type="entry name" value="Glyceraldehyde-3-phosphate dehydrogenase-like, C-terminal domain"/>
    <property type="match status" value="1"/>
</dbReference>
<dbReference type="SUPFAM" id="SSF51735">
    <property type="entry name" value="NAD(P)-binding Rossmann-fold domains"/>
    <property type="match status" value="1"/>
</dbReference>
<gene>
    <name evidence="1" type="primary">dxr</name>
    <name type="ordered locus">PXO_01125</name>
</gene>
<evidence type="ECO:0000255" key="1">
    <source>
        <dbReference type="HAMAP-Rule" id="MF_00183"/>
    </source>
</evidence>
<name>DXR_XANOP</name>
<keyword id="KW-0414">Isoprene biosynthesis</keyword>
<keyword id="KW-0464">Manganese</keyword>
<keyword id="KW-0479">Metal-binding</keyword>
<keyword id="KW-0521">NADP</keyword>
<keyword id="KW-0560">Oxidoreductase</keyword>
<proteinExistence type="inferred from homology"/>
<reference key="1">
    <citation type="journal article" date="2008" name="BMC Genomics">
        <title>Genome sequence and rapid evolution of the rice pathogen Xanthomonas oryzae pv. oryzae PXO99A.</title>
        <authorList>
            <person name="Salzberg S.L."/>
            <person name="Sommer D.D."/>
            <person name="Schatz M.C."/>
            <person name="Phillippy A.M."/>
            <person name="Rabinowicz P.D."/>
            <person name="Tsuge S."/>
            <person name="Furutani A."/>
            <person name="Ochiai H."/>
            <person name="Delcher A.L."/>
            <person name="Kelley D."/>
            <person name="Madupu R."/>
            <person name="Puiu D."/>
            <person name="Radune D."/>
            <person name="Shumway M."/>
            <person name="Trapnell C."/>
            <person name="Aparna G."/>
            <person name="Jha G."/>
            <person name="Pandey A."/>
            <person name="Patil P.B."/>
            <person name="Ishihara H."/>
            <person name="Meyer D.F."/>
            <person name="Szurek B."/>
            <person name="Verdier V."/>
            <person name="Koebnik R."/>
            <person name="Dow J.M."/>
            <person name="Ryan R.P."/>
            <person name="Hirata H."/>
            <person name="Tsuyumu S."/>
            <person name="Won Lee S."/>
            <person name="Seo Y.-S."/>
            <person name="Sriariyanum M."/>
            <person name="Ronald P.C."/>
            <person name="Sonti R.V."/>
            <person name="Van Sluys M.-A."/>
            <person name="Leach J.E."/>
            <person name="White F.F."/>
            <person name="Bogdanove A.J."/>
        </authorList>
    </citation>
    <scope>NUCLEOTIDE SEQUENCE [LARGE SCALE GENOMIC DNA]</scope>
    <source>
        <strain>PXO99A</strain>
    </source>
</reference>
<feature type="chain" id="PRO_1000098527" description="1-deoxy-D-xylulose 5-phosphate reductoisomerase">
    <location>
        <begin position="1"/>
        <end position="396"/>
    </location>
</feature>
<feature type="binding site" evidence="1">
    <location>
        <position position="15"/>
    </location>
    <ligand>
        <name>NADPH</name>
        <dbReference type="ChEBI" id="CHEBI:57783"/>
    </ligand>
</feature>
<feature type="binding site" evidence="1">
    <location>
        <position position="16"/>
    </location>
    <ligand>
        <name>NADPH</name>
        <dbReference type="ChEBI" id="CHEBI:57783"/>
    </ligand>
</feature>
<feature type="binding site" evidence="1">
    <location>
        <position position="17"/>
    </location>
    <ligand>
        <name>NADPH</name>
        <dbReference type="ChEBI" id="CHEBI:57783"/>
    </ligand>
</feature>
<feature type="binding site" evidence="1">
    <location>
        <position position="18"/>
    </location>
    <ligand>
        <name>NADPH</name>
        <dbReference type="ChEBI" id="CHEBI:57783"/>
    </ligand>
</feature>
<feature type="binding site" evidence="1">
    <location>
        <position position="41"/>
    </location>
    <ligand>
        <name>NADPH</name>
        <dbReference type="ChEBI" id="CHEBI:57783"/>
    </ligand>
</feature>
<feature type="binding site" evidence="1">
    <location>
        <position position="129"/>
    </location>
    <ligand>
        <name>NADPH</name>
        <dbReference type="ChEBI" id="CHEBI:57783"/>
    </ligand>
</feature>
<feature type="binding site" evidence="1">
    <location>
        <position position="130"/>
    </location>
    <ligand>
        <name>1-deoxy-D-xylulose 5-phosphate</name>
        <dbReference type="ChEBI" id="CHEBI:57792"/>
    </ligand>
</feature>
<feature type="binding site" evidence="1">
    <location>
        <position position="131"/>
    </location>
    <ligand>
        <name>NADPH</name>
        <dbReference type="ChEBI" id="CHEBI:57783"/>
    </ligand>
</feature>
<feature type="binding site" evidence="1">
    <location>
        <position position="155"/>
    </location>
    <ligand>
        <name>Mn(2+)</name>
        <dbReference type="ChEBI" id="CHEBI:29035"/>
    </ligand>
</feature>
<feature type="binding site" evidence="1">
    <location>
        <position position="156"/>
    </location>
    <ligand>
        <name>1-deoxy-D-xylulose 5-phosphate</name>
        <dbReference type="ChEBI" id="CHEBI:57792"/>
    </ligand>
</feature>
<feature type="binding site" evidence="1">
    <location>
        <position position="157"/>
    </location>
    <ligand>
        <name>1-deoxy-D-xylulose 5-phosphate</name>
        <dbReference type="ChEBI" id="CHEBI:57792"/>
    </ligand>
</feature>
<feature type="binding site" evidence="1">
    <location>
        <position position="157"/>
    </location>
    <ligand>
        <name>Mn(2+)</name>
        <dbReference type="ChEBI" id="CHEBI:29035"/>
    </ligand>
</feature>
<feature type="binding site" evidence="1">
    <location>
        <position position="182"/>
    </location>
    <ligand>
        <name>1-deoxy-D-xylulose 5-phosphate</name>
        <dbReference type="ChEBI" id="CHEBI:57792"/>
    </ligand>
</feature>
<feature type="binding site" evidence="1">
    <location>
        <position position="205"/>
    </location>
    <ligand>
        <name>1-deoxy-D-xylulose 5-phosphate</name>
        <dbReference type="ChEBI" id="CHEBI:57792"/>
    </ligand>
</feature>
<feature type="binding site" evidence="1">
    <location>
        <position position="211"/>
    </location>
    <ligand>
        <name>NADPH</name>
        <dbReference type="ChEBI" id="CHEBI:57783"/>
    </ligand>
</feature>
<feature type="binding site" evidence="1">
    <location>
        <position position="218"/>
    </location>
    <ligand>
        <name>1-deoxy-D-xylulose 5-phosphate</name>
        <dbReference type="ChEBI" id="CHEBI:57792"/>
    </ligand>
</feature>
<feature type="binding site" evidence="1">
    <location>
        <position position="223"/>
    </location>
    <ligand>
        <name>1-deoxy-D-xylulose 5-phosphate</name>
        <dbReference type="ChEBI" id="CHEBI:57792"/>
    </ligand>
</feature>
<feature type="binding site" evidence="1">
    <location>
        <position position="224"/>
    </location>
    <ligand>
        <name>1-deoxy-D-xylulose 5-phosphate</name>
        <dbReference type="ChEBI" id="CHEBI:57792"/>
    </ligand>
</feature>
<feature type="binding site" evidence="1">
    <location>
        <position position="227"/>
    </location>
    <ligand>
        <name>1-deoxy-D-xylulose 5-phosphate</name>
        <dbReference type="ChEBI" id="CHEBI:57792"/>
    </ligand>
</feature>
<feature type="binding site" evidence="1">
    <location>
        <position position="227"/>
    </location>
    <ligand>
        <name>Mn(2+)</name>
        <dbReference type="ChEBI" id="CHEBI:29035"/>
    </ligand>
</feature>
<protein>
    <recommendedName>
        <fullName evidence="1">1-deoxy-D-xylulose 5-phosphate reductoisomerase</fullName>
        <shortName evidence="1">DXP reductoisomerase</shortName>
        <ecNumber evidence="1">1.1.1.267</ecNumber>
    </recommendedName>
    <alternativeName>
        <fullName evidence="1">1-deoxyxylulose-5-phosphate reductoisomerase</fullName>
    </alternativeName>
    <alternativeName>
        <fullName evidence="1">2-C-methyl-D-erythritol 4-phosphate synthase</fullName>
    </alternativeName>
</protein>
<sequence length="396" mass="40742">MAGSSLRQVAVFGATGSIGASALDVIARHPERLRASVLSAGSKVEDLLALCAAHRPAHAVIADAALYPALRDGLRALGLATQAHAGAEALDALAGSDACDTVVAAIVGAAGLPSTLAAARAGKRLLLANKESLVLAGELLTRTATAAGAEIIPIDSEHSAIFQCLRSCDAGRGVRRVILTASGGPFRGRDRAALAAVTPAQAVAHPKWSMGPKISVDSATLMNKGLEVIEAHHLFGLPGEQIDVLVHPQSLVHSLVEFVDGSTLAQLGLPDMRTTLAVGLAWPERVESGVGGLDLLSQGRLDFEAPDTAAFPCLRLAWDALRAGGTAPAVLNAANEVAVSAFLQGQVGFLAIPALVEHALTTLPRHNADTLDTLLFADAQARQVTERALAHHALHA</sequence>